<keyword id="KW-0010">Activator</keyword>
<keyword id="KW-0025">Alternative splicing</keyword>
<keyword id="KW-0217">Developmental protein</keyword>
<keyword id="KW-0238">DNA-binding</keyword>
<keyword id="KW-0371">Homeobox</keyword>
<keyword id="KW-0539">Nucleus</keyword>
<keyword id="KW-0597">Phosphoprotein</keyword>
<keyword id="KW-1185">Reference proteome</keyword>
<keyword id="KW-0804">Transcription</keyword>
<keyword id="KW-0805">Transcription regulation</keyword>
<proteinExistence type="evidence at protein level"/>
<evidence type="ECO:0000255" key="1">
    <source>
        <dbReference type="PROSITE-ProRule" id="PRU00108"/>
    </source>
</evidence>
<evidence type="ECO:0000255" key="2">
    <source>
        <dbReference type="PROSITE-ProRule" id="PRU00530"/>
    </source>
</evidence>
<evidence type="ECO:0000256" key="3">
    <source>
        <dbReference type="SAM" id="MobiDB-lite"/>
    </source>
</evidence>
<evidence type="ECO:0000269" key="4">
    <source>
    </source>
</evidence>
<evidence type="ECO:0000269" key="5">
    <source>
    </source>
</evidence>
<evidence type="ECO:0000269" key="6">
    <source>
    </source>
</evidence>
<evidence type="ECO:0000269" key="7">
    <source>
    </source>
</evidence>
<evidence type="ECO:0000269" key="8">
    <source>
    </source>
</evidence>
<evidence type="ECO:0000305" key="9"/>
<sequence length="498" mass="55463">MMVLQQQQQQRLWDATTTSNTNTQTQQSANVESTPTKVCHQENAATHTFMRHMSNSPTPPSPLRSLSDCGKSFEEEELELGENCEMPQNLSSKRQARELDSELENEVLDLAPPPKRLAEEQEEEKVASVNPPQPVAFAPEEMHQALQLQLHSYIEMVRQLAPEAFPNPNLATQFLLQNSLQALAQFQALQQMKQQQREDPLPSYSTPLAKSPLRSPSLSPVPRHSKSQQRTPPNSMTANSLGMSSAVMTPNTPSMQQQPQLQQSTPKPTSGLTVASAMAKLEQSPEETTDLEELEQFAKTFKQRRIKLGFTQGDVGLAMGKLYGNDFSQTTISRFEALNLSFKNMCKLKPLLQKWLEDADSTVAKSGGGVFNINTMTSTLSSTPESILGRRRKKRTSIETTVRTTLEKAFLMNCKPTSEEISQLSERLNMDKEVIRVWFCNRRQKEKRINPSLDLDSPTGTPLSSHAFGYPPQALNMSHMQMEGGSGSFCGSSISSGE</sequence>
<name>PDM2A_DROME</name>
<gene>
    <name type="primary">pdm2</name>
    <name type="synonym">dim</name>
    <name type="synonym">OCT2</name>
    <name type="synonym">pdm-2</name>
    <name type="synonym">POU-28</name>
    <name type="ORF">CG12287</name>
</gene>
<comment type="function">
    <text evidence="4 5 6 8">DNA-binding regulatory protein implicated in early development. Involved in neuronal cell fate decision. May act as an octamer-dependent activator of transcription. Could also play an early role in specific ectodermal cells, and a subsequent role in the embryonic nervous system.</text>
</comment>
<comment type="subcellular location">
    <subcellularLocation>
        <location>Nucleus</location>
    </subcellularLocation>
</comment>
<comment type="alternative products">
    <event type="alternative splicing"/>
    <isoform>
        <id>P31369-1</id>
        <name>A</name>
        <sequence type="displayed"/>
    </isoform>
    <isoform>
        <id>Q9VK71-1</id>
        <name>B</name>
        <sequence type="external"/>
    </isoform>
</comment>
<comment type="tissue specificity">
    <text evidence="4 5 6 8">Initial expression in cellular blastoderm stage, then in ectodermal stripes during germband extension. Broad expression in the neuroectoderm followed by limitation to discrete subsets of CNS cells, and expression in specific PNS neurons and support cells.</text>
</comment>
<comment type="developmental stage">
    <text evidence="5 6">Expressed primarily during the first half of embryogenesis.</text>
</comment>
<comment type="similarity">
    <text evidence="9">Belongs to the POU transcription factor family. Class-2 subfamily.</text>
</comment>
<comment type="sequence caution" evidence="9">
    <conflict type="frameshift">
        <sequence resource="EMBL-CDS" id="AAQ23557"/>
    </conflict>
</comment>
<feature type="chain" id="PRO_0000100778" description="POU domain protein 2, isoform A">
    <location>
        <begin position="1"/>
        <end position="498"/>
    </location>
</feature>
<feature type="domain" description="POU-specific" evidence="2">
    <location>
        <begin position="286"/>
        <end position="360"/>
    </location>
</feature>
<feature type="DNA-binding region" description="Homeobox" evidence="1">
    <location>
        <begin position="391"/>
        <end position="450"/>
    </location>
</feature>
<feature type="region of interest" description="Disordered" evidence="3">
    <location>
        <begin position="1"/>
        <end position="35"/>
    </location>
</feature>
<feature type="region of interest" description="Disordered" evidence="3">
    <location>
        <begin position="191"/>
        <end position="273"/>
    </location>
</feature>
<feature type="compositionally biased region" description="Low complexity" evidence="3">
    <location>
        <begin position="1"/>
        <end position="30"/>
    </location>
</feature>
<feature type="compositionally biased region" description="Low complexity" evidence="3">
    <location>
        <begin position="207"/>
        <end position="222"/>
    </location>
</feature>
<feature type="compositionally biased region" description="Polar residues" evidence="3">
    <location>
        <begin position="228"/>
        <end position="251"/>
    </location>
</feature>
<feature type="compositionally biased region" description="Low complexity" evidence="3">
    <location>
        <begin position="252"/>
        <end position="270"/>
    </location>
</feature>
<feature type="modified residue" description="Phosphoserine" evidence="7">
    <location>
        <position position="72"/>
    </location>
</feature>
<feature type="modified residue" description="Phosphoserine" evidence="7">
    <location>
        <position position="211"/>
    </location>
</feature>
<feature type="modified residue" description="Phosphoserine" evidence="7">
    <location>
        <position position="215"/>
    </location>
</feature>
<feature type="modified residue" description="Phosphoserine" evidence="7">
    <location>
        <position position="217"/>
    </location>
</feature>
<feature type="modified residue" description="Phosphoserine" evidence="7">
    <location>
        <position position="219"/>
    </location>
</feature>
<feature type="sequence conflict" description="In Ref. 2; AAA28481." evidence="9" ref="2">
    <original>VPRH</original>
    <variation>GAPAR</variation>
    <location>
        <begin position="221"/>
        <end position="224"/>
    </location>
</feature>
<feature type="sequence conflict" description="In Ref. 4; AAA28732." evidence="9" ref="4">
    <original>M</original>
    <variation>S</variation>
    <location>
        <position position="248"/>
    </location>
</feature>
<feature type="sequence conflict" description="In Ref. 4; AAA28732." evidence="9" ref="4">
    <original>K</original>
    <variation>N</variation>
    <location>
        <position position="447"/>
    </location>
</feature>
<feature type="sequence conflict" description="In Ref. 2; AAA28481." evidence="9" ref="2">
    <original>PQA</original>
    <variation>RRL</variation>
    <location>
        <begin position="472"/>
        <end position="474"/>
    </location>
</feature>
<feature type="sequence conflict" description="In Ref. 2; AAA28481." evidence="9" ref="2">
    <location>
        <begin position="475"/>
        <end position="498"/>
    </location>
</feature>
<accession>P31369</accession>
<accession>Q24430</accession>
<accession>Q6NR41</accession>
<accession>Q9VK70</accession>
<dbReference type="EMBL" id="S80559">
    <property type="protein sequence ID" value="AAB21408.1"/>
    <property type="molecule type" value="mRNA"/>
</dbReference>
<dbReference type="EMBL" id="M65016">
    <property type="protein sequence ID" value="AAA28481.1"/>
    <property type="molecule type" value="mRNA"/>
</dbReference>
<dbReference type="EMBL" id="M93149">
    <property type="protein sequence ID" value="AAA28732.1"/>
    <property type="molecule type" value="mRNA"/>
</dbReference>
<dbReference type="EMBL" id="AE014134">
    <property type="protein sequence ID" value="AAF53209.1"/>
    <property type="molecule type" value="Genomic_DNA"/>
</dbReference>
<dbReference type="EMBL" id="BT010239">
    <property type="protein sequence ID" value="AAQ23557.1"/>
    <property type="status" value="ALT_FRAME"/>
    <property type="molecule type" value="mRNA"/>
</dbReference>
<dbReference type="EMBL" id="M81958">
    <property type="protein sequence ID" value="AAA28830.2"/>
    <property type="molecule type" value="Transcribed_RNA"/>
</dbReference>
<dbReference type="PIR" id="A56564">
    <property type="entry name" value="A56564"/>
</dbReference>
<dbReference type="RefSeq" id="NP_523558.2">
    <molecule id="P31369-1"/>
    <property type="nucleotide sequence ID" value="NM_078834.3"/>
</dbReference>
<dbReference type="SMR" id="P31369"/>
<dbReference type="BioGRID" id="60717">
    <property type="interactions" value="13"/>
</dbReference>
<dbReference type="IntAct" id="P31369">
    <property type="interactions" value="7"/>
</dbReference>
<dbReference type="iPTMnet" id="P31369"/>
<dbReference type="DNASU" id="34673"/>
<dbReference type="EnsemblMetazoa" id="FBtr0080393">
    <molecule id="P31369-1"/>
    <property type="protein sequence ID" value="FBpp0079974"/>
    <property type="gene ID" value="FBgn0004394"/>
</dbReference>
<dbReference type="GeneID" id="34673"/>
<dbReference type="AGR" id="FB:FBgn0004394"/>
<dbReference type="CTD" id="34673"/>
<dbReference type="FlyBase" id="FBgn0004394">
    <property type="gene designation" value="pdm2"/>
</dbReference>
<dbReference type="VEuPathDB" id="VectorBase:FBgn0004394"/>
<dbReference type="GeneTree" id="ENSGT00940000168873"/>
<dbReference type="HOGENOM" id="CLU_013065_7_2_1"/>
<dbReference type="OrthoDB" id="6358449at2759"/>
<dbReference type="BioGRID-ORCS" id="34673">
    <property type="hits" value="0 hits in 3 CRISPR screens"/>
</dbReference>
<dbReference type="GenomeRNAi" id="34673"/>
<dbReference type="Proteomes" id="UP000000803">
    <property type="component" value="Chromosome 2L"/>
</dbReference>
<dbReference type="Bgee" id="FBgn0004394">
    <property type="expression patterns" value="Expressed in presumptive embryonic/larval peripheral nervous system (Drosophila) and 102 other cell types or tissues"/>
</dbReference>
<dbReference type="ExpressionAtlas" id="P31369">
    <property type="expression patterns" value="baseline and differential"/>
</dbReference>
<dbReference type="GO" id="GO:0005634">
    <property type="term" value="C:nucleus"/>
    <property type="evidence" value="ECO:0000305"/>
    <property type="project" value="UniProtKB"/>
</dbReference>
<dbReference type="GO" id="GO:0003677">
    <property type="term" value="F:DNA binding"/>
    <property type="evidence" value="ECO:0000315"/>
    <property type="project" value="UniProtKB"/>
</dbReference>
<dbReference type="GO" id="GO:0001228">
    <property type="term" value="F:DNA-binding transcription activator activity, RNA polymerase II-specific"/>
    <property type="evidence" value="ECO:0000314"/>
    <property type="project" value="FlyBase"/>
</dbReference>
<dbReference type="GO" id="GO:0000981">
    <property type="term" value="F:DNA-binding transcription factor activity, RNA polymerase II-specific"/>
    <property type="evidence" value="ECO:0000318"/>
    <property type="project" value="GO_Central"/>
</dbReference>
<dbReference type="GO" id="GO:0000978">
    <property type="term" value="F:RNA polymerase II cis-regulatory region sequence-specific DNA binding"/>
    <property type="evidence" value="ECO:0000318"/>
    <property type="project" value="GO_Central"/>
</dbReference>
<dbReference type="GO" id="GO:0007417">
    <property type="term" value="P:central nervous system development"/>
    <property type="evidence" value="ECO:0000315"/>
    <property type="project" value="UniProtKB"/>
</dbReference>
<dbReference type="GO" id="GO:0007398">
    <property type="term" value="P:ectoderm development"/>
    <property type="evidence" value="ECO:0000315"/>
    <property type="project" value="UniProtKB"/>
</dbReference>
<dbReference type="GO" id="GO:0048699">
    <property type="term" value="P:generation of neurons"/>
    <property type="evidence" value="ECO:0000315"/>
    <property type="project" value="FlyBase"/>
</dbReference>
<dbReference type="GO" id="GO:0014019">
    <property type="term" value="P:neuroblast development"/>
    <property type="evidence" value="ECO:0000315"/>
    <property type="project" value="FlyBase"/>
</dbReference>
<dbReference type="GO" id="GO:0006355">
    <property type="term" value="P:regulation of DNA-templated transcription"/>
    <property type="evidence" value="ECO:0000315"/>
    <property type="project" value="UniProtKB"/>
</dbReference>
<dbReference type="GO" id="GO:0006357">
    <property type="term" value="P:regulation of transcription by RNA polymerase II"/>
    <property type="evidence" value="ECO:0000318"/>
    <property type="project" value="GO_Central"/>
</dbReference>
<dbReference type="CDD" id="cd00086">
    <property type="entry name" value="homeodomain"/>
    <property type="match status" value="1"/>
</dbReference>
<dbReference type="FunFam" id="1.10.260.40:FF:000001">
    <property type="entry name" value="POU domain protein"/>
    <property type="match status" value="1"/>
</dbReference>
<dbReference type="Gene3D" id="1.10.10.60">
    <property type="entry name" value="Homeodomain-like"/>
    <property type="match status" value="1"/>
</dbReference>
<dbReference type="Gene3D" id="1.10.260.40">
    <property type="entry name" value="lambda repressor-like DNA-binding domains"/>
    <property type="match status" value="1"/>
</dbReference>
<dbReference type="InterPro" id="IPR001356">
    <property type="entry name" value="HD"/>
</dbReference>
<dbReference type="InterPro" id="IPR017970">
    <property type="entry name" value="Homeobox_CS"/>
</dbReference>
<dbReference type="InterPro" id="IPR009057">
    <property type="entry name" value="Homeodomain-like_sf"/>
</dbReference>
<dbReference type="InterPro" id="IPR010982">
    <property type="entry name" value="Lambda_DNA-bd_dom_sf"/>
</dbReference>
<dbReference type="InterPro" id="IPR013847">
    <property type="entry name" value="POU"/>
</dbReference>
<dbReference type="InterPro" id="IPR000327">
    <property type="entry name" value="POU_dom"/>
</dbReference>
<dbReference type="InterPro" id="IPR050255">
    <property type="entry name" value="POU_domain_TF"/>
</dbReference>
<dbReference type="PANTHER" id="PTHR11636">
    <property type="entry name" value="POU DOMAIN"/>
    <property type="match status" value="1"/>
</dbReference>
<dbReference type="PANTHER" id="PTHR11636:SF89">
    <property type="entry name" value="POU DOMAIN PROTEIN 2, ISOFORM B-RELATED"/>
    <property type="match status" value="1"/>
</dbReference>
<dbReference type="Pfam" id="PF00046">
    <property type="entry name" value="Homeodomain"/>
    <property type="match status" value="1"/>
</dbReference>
<dbReference type="Pfam" id="PF00157">
    <property type="entry name" value="Pou"/>
    <property type="match status" value="1"/>
</dbReference>
<dbReference type="PRINTS" id="PR00028">
    <property type="entry name" value="POUDOMAIN"/>
</dbReference>
<dbReference type="SMART" id="SM00389">
    <property type="entry name" value="HOX"/>
    <property type="match status" value="1"/>
</dbReference>
<dbReference type="SMART" id="SM00352">
    <property type="entry name" value="POU"/>
    <property type="match status" value="1"/>
</dbReference>
<dbReference type="SUPFAM" id="SSF46689">
    <property type="entry name" value="Homeodomain-like"/>
    <property type="match status" value="1"/>
</dbReference>
<dbReference type="SUPFAM" id="SSF47413">
    <property type="entry name" value="lambda repressor-like DNA-binding domains"/>
    <property type="match status" value="1"/>
</dbReference>
<dbReference type="PROSITE" id="PS00027">
    <property type="entry name" value="HOMEOBOX_1"/>
    <property type="match status" value="1"/>
</dbReference>
<dbReference type="PROSITE" id="PS50071">
    <property type="entry name" value="HOMEOBOX_2"/>
    <property type="match status" value="1"/>
</dbReference>
<dbReference type="PROSITE" id="PS00035">
    <property type="entry name" value="POU_1"/>
    <property type="match status" value="1"/>
</dbReference>
<dbReference type="PROSITE" id="PS00465">
    <property type="entry name" value="POU_2"/>
    <property type="match status" value="1"/>
</dbReference>
<dbReference type="PROSITE" id="PS51179">
    <property type="entry name" value="POU_3"/>
    <property type="match status" value="1"/>
</dbReference>
<organism>
    <name type="scientific">Drosophila melanogaster</name>
    <name type="common">Fruit fly</name>
    <dbReference type="NCBI Taxonomy" id="7227"/>
    <lineage>
        <taxon>Eukaryota</taxon>
        <taxon>Metazoa</taxon>
        <taxon>Ecdysozoa</taxon>
        <taxon>Arthropoda</taxon>
        <taxon>Hexapoda</taxon>
        <taxon>Insecta</taxon>
        <taxon>Pterygota</taxon>
        <taxon>Neoptera</taxon>
        <taxon>Endopterygota</taxon>
        <taxon>Diptera</taxon>
        <taxon>Brachycera</taxon>
        <taxon>Muscomorpha</taxon>
        <taxon>Ephydroidea</taxon>
        <taxon>Drosophilidae</taxon>
        <taxon>Drosophila</taxon>
        <taxon>Sophophora</taxon>
    </lineage>
</organism>
<reference key="1">
    <citation type="journal article" date="1991" name="Mech. Dev.">
        <title>Characterization of two Drosophila POU domain genes, related to oct-1 and oct-2, and the regulation of their expression patterns.</title>
        <authorList>
            <person name="Lloyd A."/>
            <person name="Sakonju S."/>
        </authorList>
    </citation>
    <scope>NUCLEOTIDE SEQUENCE [MRNA]</scope>
    <scope>FUNCTION</scope>
    <scope>TISSUE SPECIFICITY</scope>
    <scope>DEVELOPMENTAL STAGE</scope>
</reference>
<reference key="2">
    <citation type="journal article" date="1991" name="Proc. Natl. Acad. Sci. U.S.A.">
        <title>Two closely linked Drosophila POU domain genes are expressed in neuroblasts and sensory elements.</title>
        <authorList>
            <person name="Dick T."/>
            <person name="Yang X."/>
            <person name="Yeo S."/>
            <person name="Chia W."/>
        </authorList>
    </citation>
    <scope>NUCLEOTIDE SEQUENCE [MRNA]</scope>
    <scope>FUNCTION</scope>
    <scope>TISSUE SPECIFICITY</scope>
    <source>
        <tissue>Embryo</tissue>
    </source>
</reference>
<reference key="3">
    <citation type="journal article" date="1992" name="Proc. Natl. Acad. Sci. U.S.A.">
        <title>dOct2, a Drosophila Oct transcription factor that functions in yeast.</title>
        <authorList>
            <person name="Prakash K."/>
            <person name="Fang X.D."/>
            <person name="Engelberg D."/>
            <person name="Behal A."/>
            <person name="Parker C.S."/>
        </authorList>
    </citation>
    <scope>NUCLEOTIDE SEQUENCE [MRNA]</scope>
    <scope>FUNCTION</scope>
    <scope>TISSUE SPECIFICITY</scope>
    <source>
        <tissue>Embryo</tissue>
    </source>
</reference>
<reference key="4">
    <citation type="journal article" date="2000" name="Science">
        <title>The genome sequence of Drosophila melanogaster.</title>
        <authorList>
            <person name="Adams M.D."/>
            <person name="Celniker S.E."/>
            <person name="Holt R.A."/>
            <person name="Evans C.A."/>
            <person name="Gocayne J.D."/>
            <person name="Amanatides P.G."/>
            <person name="Scherer S.E."/>
            <person name="Li P.W."/>
            <person name="Hoskins R.A."/>
            <person name="Galle R.F."/>
            <person name="George R.A."/>
            <person name="Lewis S.E."/>
            <person name="Richards S."/>
            <person name="Ashburner M."/>
            <person name="Henderson S.N."/>
            <person name="Sutton G.G."/>
            <person name="Wortman J.R."/>
            <person name="Yandell M.D."/>
            <person name="Zhang Q."/>
            <person name="Chen L.X."/>
            <person name="Brandon R.C."/>
            <person name="Rogers Y.-H.C."/>
            <person name="Blazej R.G."/>
            <person name="Champe M."/>
            <person name="Pfeiffer B.D."/>
            <person name="Wan K.H."/>
            <person name="Doyle C."/>
            <person name="Baxter E.G."/>
            <person name="Helt G."/>
            <person name="Nelson C.R."/>
            <person name="Miklos G.L.G."/>
            <person name="Abril J.F."/>
            <person name="Agbayani A."/>
            <person name="An H.-J."/>
            <person name="Andrews-Pfannkoch C."/>
            <person name="Baldwin D."/>
            <person name="Ballew R.M."/>
            <person name="Basu A."/>
            <person name="Baxendale J."/>
            <person name="Bayraktaroglu L."/>
            <person name="Beasley E.M."/>
            <person name="Beeson K.Y."/>
            <person name="Benos P.V."/>
            <person name="Berman B.P."/>
            <person name="Bhandari D."/>
            <person name="Bolshakov S."/>
            <person name="Borkova D."/>
            <person name="Botchan M.R."/>
            <person name="Bouck J."/>
            <person name="Brokstein P."/>
            <person name="Brottier P."/>
            <person name="Burtis K.C."/>
            <person name="Busam D.A."/>
            <person name="Butler H."/>
            <person name="Cadieu E."/>
            <person name="Center A."/>
            <person name="Chandra I."/>
            <person name="Cherry J.M."/>
            <person name="Cawley S."/>
            <person name="Dahlke C."/>
            <person name="Davenport L.B."/>
            <person name="Davies P."/>
            <person name="de Pablos B."/>
            <person name="Delcher A."/>
            <person name="Deng Z."/>
            <person name="Mays A.D."/>
            <person name="Dew I."/>
            <person name="Dietz S.M."/>
            <person name="Dodson K."/>
            <person name="Doup L.E."/>
            <person name="Downes M."/>
            <person name="Dugan-Rocha S."/>
            <person name="Dunkov B.C."/>
            <person name="Dunn P."/>
            <person name="Durbin K.J."/>
            <person name="Evangelista C.C."/>
            <person name="Ferraz C."/>
            <person name="Ferriera S."/>
            <person name="Fleischmann W."/>
            <person name="Fosler C."/>
            <person name="Gabrielian A.E."/>
            <person name="Garg N.S."/>
            <person name="Gelbart W.M."/>
            <person name="Glasser K."/>
            <person name="Glodek A."/>
            <person name="Gong F."/>
            <person name="Gorrell J.H."/>
            <person name="Gu Z."/>
            <person name="Guan P."/>
            <person name="Harris M."/>
            <person name="Harris N.L."/>
            <person name="Harvey D.A."/>
            <person name="Heiman T.J."/>
            <person name="Hernandez J.R."/>
            <person name="Houck J."/>
            <person name="Hostin D."/>
            <person name="Houston K.A."/>
            <person name="Howland T.J."/>
            <person name="Wei M.-H."/>
            <person name="Ibegwam C."/>
            <person name="Jalali M."/>
            <person name="Kalush F."/>
            <person name="Karpen G.H."/>
            <person name="Ke Z."/>
            <person name="Kennison J.A."/>
            <person name="Ketchum K.A."/>
            <person name="Kimmel B.E."/>
            <person name="Kodira C.D."/>
            <person name="Kraft C.L."/>
            <person name="Kravitz S."/>
            <person name="Kulp D."/>
            <person name="Lai Z."/>
            <person name="Lasko P."/>
            <person name="Lei Y."/>
            <person name="Levitsky A.A."/>
            <person name="Li J.H."/>
            <person name="Li Z."/>
            <person name="Liang Y."/>
            <person name="Lin X."/>
            <person name="Liu X."/>
            <person name="Mattei B."/>
            <person name="McIntosh T.C."/>
            <person name="McLeod M.P."/>
            <person name="McPherson D."/>
            <person name="Merkulov G."/>
            <person name="Milshina N.V."/>
            <person name="Mobarry C."/>
            <person name="Morris J."/>
            <person name="Moshrefi A."/>
            <person name="Mount S.M."/>
            <person name="Moy M."/>
            <person name="Murphy B."/>
            <person name="Murphy L."/>
            <person name="Muzny D.M."/>
            <person name="Nelson D.L."/>
            <person name="Nelson D.R."/>
            <person name="Nelson K.A."/>
            <person name="Nixon K."/>
            <person name="Nusskern D.R."/>
            <person name="Pacleb J.M."/>
            <person name="Palazzolo M."/>
            <person name="Pittman G.S."/>
            <person name="Pan S."/>
            <person name="Pollard J."/>
            <person name="Puri V."/>
            <person name="Reese M.G."/>
            <person name="Reinert K."/>
            <person name="Remington K."/>
            <person name="Saunders R.D.C."/>
            <person name="Scheeler F."/>
            <person name="Shen H."/>
            <person name="Shue B.C."/>
            <person name="Siden-Kiamos I."/>
            <person name="Simpson M."/>
            <person name="Skupski M.P."/>
            <person name="Smith T.J."/>
            <person name="Spier E."/>
            <person name="Spradling A.C."/>
            <person name="Stapleton M."/>
            <person name="Strong R."/>
            <person name="Sun E."/>
            <person name="Svirskas R."/>
            <person name="Tector C."/>
            <person name="Turner R."/>
            <person name="Venter E."/>
            <person name="Wang A.H."/>
            <person name="Wang X."/>
            <person name="Wang Z.-Y."/>
            <person name="Wassarman D.A."/>
            <person name="Weinstock G.M."/>
            <person name="Weissenbach J."/>
            <person name="Williams S.M."/>
            <person name="Woodage T."/>
            <person name="Worley K.C."/>
            <person name="Wu D."/>
            <person name="Yang S."/>
            <person name="Yao Q.A."/>
            <person name="Ye J."/>
            <person name="Yeh R.-F."/>
            <person name="Zaveri J.S."/>
            <person name="Zhan M."/>
            <person name="Zhang G."/>
            <person name="Zhao Q."/>
            <person name="Zheng L."/>
            <person name="Zheng X.H."/>
            <person name="Zhong F.N."/>
            <person name="Zhong W."/>
            <person name="Zhou X."/>
            <person name="Zhu S.C."/>
            <person name="Zhu X."/>
            <person name="Smith H.O."/>
            <person name="Gibbs R.A."/>
            <person name="Myers E.W."/>
            <person name="Rubin G.M."/>
            <person name="Venter J.C."/>
        </authorList>
    </citation>
    <scope>NUCLEOTIDE SEQUENCE [LARGE SCALE GENOMIC DNA]</scope>
    <source>
        <strain>Berkeley</strain>
    </source>
</reference>
<reference key="5">
    <citation type="journal article" date="2002" name="Genome Biol.">
        <title>Annotation of the Drosophila melanogaster euchromatic genome: a systematic review.</title>
        <authorList>
            <person name="Misra S."/>
            <person name="Crosby M.A."/>
            <person name="Mungall C.J."/>
            <person name="Matthews B.B."/>
            <person name="Campbell K.S."/>
            <person name="Hradecky P."/>
            <person name="Huang Y."/>
            <person name="Kaminker J.S."/>
            <person name="Millburn G.H."/>
            <person name="Prochnik S.E."/>
            <person name="Smith C.D."/>
            <person name="Tupy J.L."/>
            <person name="Whitfield E.J."/>
            <person name="Bayraktaroglu L."/>
            <person name="Berman B.P."/>
            <person name="Bettencourt B.R."/>
            <person name="Celniker S.E."/>
            <person name="de Grey A.D.N.J."/>
            <person name="Drysdale R.A."/>
            <person name="Harris N.L."/>
            <person name="Richter J."/>
            <person name="Russo S."/>
            <person name="Schroeder A.J."/>
            <person name="Shu S.Q."/>
            <person name="Stapleton M."/>
            <person name="Yamada C."/>
            <person name="Ashburner M."/>
            <person name="Gelbart W.M."/>
            <person name="Rubin G.M."/>
            <person name="Lewis S.E."/>
        </authorList>
    </citation>
    <scope>GENOME REANNOTATION</scope>
    <scope>ALTERNATIVE SPLICING</scope>
    <source>
        <strain>Berkeley</strain>
    </source>
</reference>
<reference key="6">
    <citation type="submission" date="2003-08" db="EMBL/GenBank/DDBJ databases">
        <authorList>
            <person name="Stapleton M."/>
            <person name="Brokstein P."/>
            <person name="Hong L."/>
            <person name="Agbayani A."/>
            <person name="Carlson J.W."/>
            <person name="Champe M."/>
            <person name="Chavez C."/>
            <person name="Dorsett V."/>
            <person name="Dresnek D."/>
            <person name="Farfan D."/>
            <person name="Frise E."/>
            <person name="George R.A."/>
            <person name="Gonzalez M."/>
            <person name="Guarin H."/>
            <person name="Kronmiller B."/>
            <person name="Li P.W."/>
            <person name="Liao G."/>
            <person name="Miranda A."/>
            <person name="Mungall C.J."/>
            <person name="Nunoo J."/>
            <person name="Pacleb J.M."/>
            <person name="Paragas V."/>
            <person name="Park S."/>
            <person name="Patel S."/>
            <person name="Phouanenavong S."/>
            <person name="Wan K.H."/>
            <person name="Yu C."/>
            <person name="Lewis S.E."/>
            <person name="Rubin G.M."/>
            <person name="Celniker S.E."/>
        </authorList>
    </citation>
    <scope>NUCLEOTIDE SEQUENCE [LARGE SCALE MRNA]</scope>
    <source>
        <strain>Berkeley</strain>
        <tissue>Embryo</tissue>
    </source>
</reference>
<reference key="7">
    <citation type="journal article" date="1991" name="Mech. Dev.">
        <title>Isolation of a family of Drosophila POU domain genes expressed in early development.</title>
        <authorList>
            <person name="Billin A.N."/>
            <person name="Cockerill K.A."/>
            <person name="Poole S.J."/>
        </authorList>
    </citation>
    <scope>NUCLEOTIDE SEQUENCE [MRNA] OF 68-498</scope>
    <scope>FUNCTION</scope>
    <scope>TISSUE SPECIFICITY</scope>
    <scope>DEVELOPMENTAL STAGE</scope>
    <source>
        <strain>Oregon-R</strain>
        <tissue>Embryo</tissue>
    </source>
</reference>
<reference key="8">
    <citation type="journal article" date="2008" name="J. Proteome Res.">
        <title>Phosphoproteome analysis of Drosophila melanogaster embryos.</title>
        <authorList>
            <person name="Zhai B."/>
            <person name="Villen J."/>
            <person name="Beausoleil S.A."/>
            <person name="Mintseris J."/>
            <person name="Gygi S.P."/>
        </authorList>
    </citation>
    <scope>PHOSPHORYLATION [LARGE SCALE ANALYSIS] AT SER-72; SER-211; SER-215; SER-217 AND SER-219</scope>
    <scope>IDENTIFICATION BY MASS SPECTROMETRY</scope>
    <source>
        <tissue>Embryo</tissue>
    </source>
</reference>
<protein>
    <recommendedName>
        <fullName>POU domain protein 2, isoform A</fullName>
    </recommendedName>
    <alternativeName>
        <fullName>Miti-mere</fullName>
    </alternativeName>
    <alternativeName>
        <fullName>Pdm-2</fullName>
    </alternativeName>
    <alternativeName>
        <fullName>Protein didymous</fullName>
    </alternativeName>
    <alternativeName>
        <fullName>dOct2</fullName>
    </alternativeName>
    <alternativeName>
        <fullName>dPOU-28</fullName>
    </alternativeName>
</protein>